<gene>
    <name type="primary">grxA</name>
    <name type="synonym">grx</name>
    <name type="ordered locus">b0849</name>
    <name type="ordered locus">JW0833</name>
</gene>
<feature type="chain" id="PRO_0000141581" description="Glutaredoxin 1">
    <location>
        <begin position="1"/>
        <end position="85"/>
    </location>
</feature>
<feature type="domain" description="Glutaredoxin" evidence="1">
    <location>
        <begin position="1"/>
        <end position="85"/>
    </location>
</feature>
<feature type="modified residue" description="O-AMP-tyrosine; by YdiU" evidence="2">
    <location>
        <position position="13"/>
    </location>
</feature>
<feature type="disulfide bond" description="Redox-active">
    <location>
        <begin position="11"/>
        <end position="14"/>
    </location>
</feature>
<feature type="mutagenesis site" description="No defect in AMPylation by YdiU." evidence="2">
    <original>G</original>
    <variation>A</variation>
    <location>
        <position position="10"/>
    </location>
</feature>
<feature type="mutagenesis site" description="Abolishes AMPylation by YdiU." evidence="2">
    <original>C</original>
    <variation>A</variation>
    <location>
        <position position="11"/>
    </location>
</feature>
<feature type="mutagenesis site" description="Abolishes AMPylation by YdiU." evidence="2">
    <original>P</original>
    <variation>A</variation>
    <location>
        <position position="12"/>
    </location>
</feature>
<feature type="mutagenesis site" description="Abolishes AMPylation by YdiU." evidence="2">
    <original>Y</original>
    <variation>F</variation>
    <variation>S</variation>
    <variation>T</variation>
    <location>
        <position position="13"/>
    </location>
</feature>
<feature type="mutagenesis site" description="Partially abolishes AMPylation by YdiU." evidence="2">
    <original>C</original>
    <variation>A</variation>
    <location>
        <position position="14"/>
    </location>
</feature>
<feature type="mutagenesis site" description="Partially abolishes AMPylation by YdiU." evidence="2">
    <original>V</original>
    <variation>A</variation>
    <location>
        <position position="15"/>
    </location>
</feature>
<feature type="mutagenesis site" description="Partially abolishes AMPylation by YdiU." evidence="2">
    <original>R</original>
    <variation>A</variation>
    <location>
        <position position="16"/>
    </location>
</feature>
<feature type="strand" evidence="4">
    <location>
        <begin position="2"/>
        <end position="6"/>
    </location>
</feature>
<feature type="helix" evidence="4">
    <location>
        <begin position="13"/>
        <end position="28"/>
    </location>
</feature>
<feature type="strand" evidence="4">
    <location>
        <begin position="32"/>
        <end position="36"/>
    </location>
</feature>
<feature type="helix" evidence="4">
    <location>
        <begin position="38"/>
        <end position="41"/>
    </location>
</feature>
<feature type="helix" evidence="4">
    <location>
        <begin position="46"/>
        <end position="51"/>
    </location>
</feature>
<feature type="strand" evidence="4">
    <location>
        <begin position="61"/>
        <end position="64"/>
    </location>
</feature>
<feature type="strand" evidence="4">
    <location>
        <begin position="67"/>
        <end position="72"/>
    </location>
</feature>
<feature type="helix" evidence="4">
    <location>
        <begin position="73"/>
        <end position="84"/>
    </location>
</feature>
<sequence length="85" mass="9685">MQTVIFGRSGCPYCVRAKDLAEKLSNERDDFQYQYVDIRAEGITKEDLQQKAGKPVETVPQIFVDQQHIGGYTDFAAWVKENLDA</sequence>
<keyword id="KW-0002">3D-structure</keyword>
<keyword id="KW-0215">Deoxyribonucleotide synthesis</keyword>
<keyword id="KW-0903">Direct protein sequencing</keyword>
<keyword id="KW-1015">Disulfide bond</keyword>
<keyword id="KW-0249">Electron transport</keyword>
<keyword id="KW-0547">Nucleotide-binding</keyword>
<keyword id="KW-0597">Phosphoprotein</keyword>
<keyword id="KW-0676">Redox-active center</keyword>
<keyword id="KW-1185">Reference proteome</keyword>
<keyword id="KW-0813">Transport</keyword>
<proteinExistence type="evidence at protein level"/>
<dbReference type="EMBL" id="M13449">
    <property type="protein sequence ID" value="AAA23936.1"/>
    <property type="molecule type" value="Genomic_DNA"/>
</dbReference>
<dbReference type="EMBL" id="U18655">
    <property type="protein sequence ID" value="AAC43449.1"/>
    <property type="molecule type" value="Genomic_DNA"/>
</dbReference>
<dbReference type="EMBL" id="U00096">
    <property type="protein sequence ID" value="AAC73936.1"/>
    <property type="molecule type" value="Genomic_DNA"/>
</dbReference>
<dbReference type="EMBL" id="AP009048">
    <property type="protein sequence ID" value="BAA35552.2"/>
    <property type="molecule type" value="Genomic_DNA"/>
</dbReference>
<dbReference type="PIR" id="A00283">
    <property type="entry name" value="GDEC"/>
</dbReference>
<dbReference type="RefSeq" id="NP_415370.1">
    <property type="nucleotide sequence ID" value="NC_000913.3"/>
</dbReference>
<dbReference type="RefSeq" id="WP_001195240.1">
    <property type="nucleotide sequence ID" value="NZ_STEB01000019.1"/>
</dbReference>
<dbReference type="PDB" id="1EGO">
    <property type="method" value="NMR"/>
    <property type="chains" value="A=1-85"/>
</dbReference>
<dbReference type="PDB" id="1EGR">
    <property type="method" value="NMR"/>
    <property type="chains" value="A=1-85"/>
</dbReference>
<dbReference type="PDB" id="1GRX">
    <property type="method" value="NMR"/>
    <property type="chains" value="A=1-85"/>
</dbReference>
<dbReference type="PDB" id="1QFN">
    <property type="method" value="NMR"/>
    <property type="chains" value="A=1-85"/>
</dbReference>
<dbReference type="PDBsum" id="1EGO"/>
<dbReference type="PDBsum" id="1EGR"/>
<dbReference type="PDBsum" id="1GRX"/>
<dbReference type="PDBsum" id="1QFN"/>
<dbReference type="BMRB" id="P68688"/>
<dbReference type="SMR" id="P68688"/>
<dbReference type="BioGRID" id="4259990">
    <property type="interactions" value="18"/>
</dbReference>
<dbReference type="BioGRID" id="849853">
    <property type="interactions" value="5"/>
</dbReference>
<dbReference type="FunCoup" id="P68688">
    <property type="interactions" value="14"/>
</dbReference>
<dbReference type="IntAct" id="P68688">
    <property type="interactions" value="16"/>
</dbReference>
<dbReference type="STRING" id="511145.b0849"/>
<dbReference type="jPOST" id="P68688"/>
<dbReference type="PaxDb" id="511145-b0849"/>
<dbReference type="EnsemblBacteria" id="AAC73936">
    <property type="protein sequence ID" value="AAC73936"/>
    <property type="gene ID" value="b0849"/>
</dbReference>
<dbReference type="GeneID" id="93776573"/>
<dbReference type="GeneID" id="945479"/>
<dbReference type="KEGG" id="ecj:JW0833"/>
<dbReference type="KEGG" id="eco:b0849"/>
<dbReference type="KEGG" id="ecoc:C3026_05300"/>
<dbReference type="PATRIC" id="fig|1411691.4.peg.1429"/>
<dbReference type="EchoBASE" id="EB0412"/>
<dbReference type="eggNOG" id="COG0695">
    <property type="taxonomic scope" value="Bacteria"/>
</dbReference>
<dbReference type="InParanoid" id="P68688"/>
<dbReference type="OMA" id="VGGCTEF"/>
<dbReference type="OrthoDB" id="9814618at2"/>
<dbReference type="PhylomeDB" id="P68688"/>
<dbReference type="BioCyc" id="EcoCyc:RED-GLUTAREDOXIN"/>
<dbReference type="BioCyc" id="MetaCyc:RED-GLUTAREDOXIN"/>
<dbReference type="SABIO-RK" id="P68688"/>
<dbReference type="EvolutionaryTrace" id="P68688"/>
<dbReference type="PRO" id="PR:P68688"/>
<dbReference type="Proteomes" id="UP000000625">
    <property type="component" value="Chromosome"/>
</dbReference>
<dbReference type="GO" id="GO:0005737">
    <property type="term" value="C:cytoplasm"/>
    <property type="evidence" value="ECO:0000318"/>
    <property type="project" value="GO_Central"/>
</dbReference>
<dbReference type="GO" id="GO:0015036">
    <property type="term" value="F:disulfide oxidoreductase activity"/>
    <property type="evidence" value="ECO:0000314"/>
    <property type="project" value="EcoCyc"/>
</dbReference>
<dbReference type="GO" id="GO:0009055">
    <property type="term" value="F:electron transfer activity"/>
    <property type="evidence" value="ECO:0007669"/>
    <property type="project" value="InterPro"/>
</dbReference>
<dbReference type="GO" id="GO:0015038">
    <property type="term" value="F:glutathione disulfide oxidoreductase activity"/>
    <property type="evidence" value="ECO:0000318"/>
    <property type="project" value="GO_Central"/>
</dbReference>
<dbReference type="GO" id="GO:0000166">
    <property type="term" value="F:nucleotide binding"/>
    <property type="evidence" value="ECO:0007669"/>
    <property type="project" value="UniProtKB-KW"/>
</dbReference>
<dbReference type="GO" id="GO:0019153">
    <property type="term" value="F:protein-disulfide reductase (glutathione) activity"/>
    <property type="evidence" value="ECO:0000314"/>
    <property type="project" value="EcoCyc"/>
</dbReference>
<dbReference type="GO" id="GO:0015035">
    <property type="term" value="F:protein-disulfide reductase activity"/>
    <property type="evidence" value="ECO:0000314"/>
    <property type="project" value="EcoCyc"/>
</dbReference>
<dbReference type="GO" id="GO:0045454">
    <property type="term" value="P:cell redox homeostasis"/>
    <property type="evidence" value="ECO:0007669"/>
    <property type="project" value="InterPro"/>
</dbReference>
<dbReference type="GO" id="GO:0034599">
    <property type="term" value="P:cellular response to oxidative stress"/>
    <property type="evidence" value="ECO:0000270"/>
    <property type="project" value="EcoCyc"/>
</dbReference>
<dbReference type="GO" id="GO:0019345">
    <property type="term" value="P:cysteine biosynthetic process via S-sulfo-L-cysteine"/>
    <property type="evidence" value="ECO:0000315"/>
    <property type="project" value="EcoCyc"/>
</dbReference>
<dbReference type="GO" id="GO:0009263">
    <property type="term" value="P:deoxyribonucleotide biosynthetic process"/>
    <property type="evidence" value="ECO:0000315"/>
    <property type="project" value="EcoCyc"/>
</dbReference>
<dbReference type="GO" id="GO:0010134">
    <property type="term" value="P:sulfate assimilation via adenylyl sulfate reduction"/>
    <property type="evidence" value="ECO:0000314"/>
    <property type="project" value="EcoCyc"/>
</dbReference>
<dbReference type="CDD" id="cd02066">
    <property type="entry name" value="GRX_family"/>
    <property type="match status" value="1"/>
</dbReference>
<dbReference type="DisProt" id="DP01740"/>
<dbReference type="Gene3D" id="3.40.30.10">
    <property type="entry name" value="Glutaredoxin"/>
    <property type="match status" value="1"/>
</dbReference>
<dbReference type="InterPro" id="IPR011767">
    <property type="entry name" value="GLR_AS"/>
</dbReference>
<dbReference type="InterPro" id="IPR002109">
    <property type="entry name" value="Glutaredoxin"/>
</dbReference>
<dbReference type="InterPro" id="IPR014025">
    <property type="entry name" value="Glutaredoxin_subgr"/>
</dbReference>
<dbReference type="InterPro" id="IPR011902">
    <property type="entry name" value="GRXA"/>
</dbReference>
<dbReference type="InterPro" id="IPR036249">
    <property type="entry name" value="Thioredoxin-like_sf"/>
</dbReference>
<dbReference type="NCBIfam" id="TIGR02183">
    <property type="entry name" value="GRXA"/>
    <property type="match status" value="1"/>
</dbReference>
<dbReference type="NCBIfam" id="NF008401">
    <property type="entry name" value="PRK11200.1"/>
    <property type="match status" value="1"/>
</dbReference>
<dbReference type="PANTHER" id="PTHR45694:SF28">
    <property type="entry name" value="GLUTAREDOXIN 1"/>
    <property type="match status" value="1"/>
</dbReference>
<dbReference type="PANTHER" id="PTHR45694">
    <property type="entry name" value="GLUTAREDOXIN 2"/>
    <property type="match status" value="1"/>
</dbReference>
<dbReference type="Pfam" id="PF00462">
    <property type="entry name" value="Glutaredoxin"/>
    <property type="match status" value="1"/>
</dbReference>
<dbReference type="PRINTS" id="PR00160">
    <property type="entry name" value="GLUTAREDOXIN"/>
</dbReference>
<dbReference type="SUPFAM" id="SSF52833">
    <property type="entry name" value="Thioredoxin-like"/>
    <property type="match status" value="1"/>
</dbReference>
<dbReference type="PROSITE" id="PS00195">
    <property type="entry name" value="GLUTAREDOXIN_1"/>
    <property type="match status" value="1"/>
</dbReference>
<dbReference type="PROSITE" id="PS51354">
    <property type="entry name" value="GLUTAREDOXIN_2"/>
    <property type="match status" value="1"/>
</dbReference>
<name>GLRX1_ECOLI</name>
<comment type="function">
    <text>The disulfide bond functions as an electron carrier in the glutathione-dependent synthesis of deoxyribonucleotides by the enzyme ribonucleotide reductase. In addition, it is also involved in reducing some disulfide bonds in a coupled system with glutathione reductase.</text>
</comment>
<comment type="subunit">
    <text>Monomer.</text>
</comment>
<comment type="similarity">
    <text evidence="3">Belongs to the glutaredoxin family.</text>
</comment>
<reference key="1">
    <citation type="journal article" date="1983" name="Eur. J. Biochem.">
        <title>The primary structure of Escherichia coli glutaredoxin. Distant homology with thioredoxins in a superfamily of small proteins with a redox-active cystine disulfide/cysteine dithiol.</title>
        <authorList>
            <person name="Hoeoeg J.-O."/>
            <person name="Joernvall H."/>
            <person name="Holmgren A."/>
            <person name="Carlquist M."/>
            <person name="Persson M."/>
        </authorList>
    </citation>
    <scope>PROTEIN SEQUENCE</scope>
    <source>
        <strain>K12</strain>
    </source>
</reference>
<reference key="2">
    <citation type="journal article" date="1986" name="Gene">
        <title>Cloning and expression of the glutaredoxin (grx) gene of Escherichia coli.</title>
        <authorList>
            <person name="Hoeoeg J.-O."/>
            <person name="von Bahr-Lindstroem H."/>
            <person name="Joernvall H."/>
            <person name="Holmgren A."/>
        </authorList>
    </citation>
    <scope>NUCLEOTIDE SEQUENCE [GENOMIC DNA]</scope>
</reference>
<reference key="3">
    <citation type="submission" date="1994-12" db="EMBL/GenBank/DDBJ databases">
        <authorList>
            <person name="Chatterjee P.K."/>
            <person name="Sternberg N.L."/>
        </authorList>
    </citation>
    <scope>NUCLEOTIDE SEQUENCE [GENOMIC DNA]</scope>
</reference>
<reference key="4">
    <citation type="journal article" date="1996" name="DNA Res.">
        <title>A 718-kb DNA sequence of the Escherichia coli K-12 genome corresponding to the 12.7-28.0 min region on the linkage map.</title>
        <authorList>
            <person name="Oshima T."/>
            <person name="Aiba H."/>
            <person name="Baba T."/>
            <person name="Fujita K."/>
            <person name="Hayashi K."/>
            <person name="Honjo A."/>
            <person name="Ikemoto K."/>
            <person name="Inada T."/>
            <person name="Itoh T."/>
            <person name="Kajihara M."/>
            <person name="Kanai K."/>
            <person name="Kashimoto K."/>
            <person name="Kimura S."/>
            <person name="Kitagawa M."/>
            <person name="Makino K."/>
            <person name="Masuda S."/>
            <person name="Miki T."/>
            <person name="Mizobuchi K."/>
            <person name="Mori H."/>
            <person name="Motomura K."/>
            <person name="Nakamura Y."/>
            <person name="Nashimoto H."/>
            <person name="Nishio Y."/>
            <person name="Saito N."/>
            <person name="Sampei G."/>
            <person name="Seki Y."/>
            <person name="Tagami H."/>
            <person name="Takemoto K."/>
            <person name="Wada C."/>
            <person name="Yamamoto Y."/>
            <person name="Yano M."/>
            <person name="Horiuchi T."/>
        </authorList>
    </citation>
    <scope>NUCLEOTIDE SEQUENCE [LARGE SCALE GENOMIC DNA]</scope>
    <source>
        <strain>K12 / W3110 / ATCC 27325 / DSM 5911</strain>
    </source>
</reference>
<reference key="5">
    <citation type="journal article" date="1997" name="Science">
        <title>The complete genome sequence of Escherichia coli K-12.</title>
        <authorList>
            <person name="Blattner F.R."/>
            <person name="Plunkett G. III"/>
            <person name="Bloch C.A."/>
            <person name="Perna N.T."/>
            <person name="Burland V."/>
            <person name="Riley M."/>
            <person name="Collado-Vides J."/>
            <person name="Glasner J.D."/>
            <person name="Rode C.K."/>
            <person name="Mayhew G.F."/>
            <person name="Gregor J."/>
            <person name="Davis N.W."/>
            <person name="Kirkpatrick H.A."/>
            <person name="Goeden M.A."/>
            <person name="Rose D.J."/>
            <person name="Mau B."/>
            <person name="Shao Y."/>
        </authorList>
    </citation>
    <scope>NUCLEOTIDE SEQUENCE [LARGE SCALE GENOMIC DNA]</scope>
    <source>
        <strain>K12 / MG1655 / ATCC 47076</strain>
    </source>
</reference>
<reference key="6">
    <citation type="journal article" date="2006" name="Mol. Syst. Biol.">
        <title>Highly accurate genome sequences of Escherichia coli K-12 strains MG1655 and W3110.</title>
        <authorList>
            <person name="Hayashi K."/>
            <person name="Morooka N."/>
            <person name="Yamamoto Y."/>
            <person name="Fujita K."/>
            <person name="Isono K."/>
            <person name="Choi S."/>
            <person name="Ohtsubo E."/>
            <person name="Baba T."/>
            <person name="Wanner B.L."/>
            <person name="Mori H."/>
            <person name="Horiuchi T."/>
        </authorList>
    </citation>
    <scope>NUCLEOTIDE SEQUENCE [LARGE SCALE GENOMIC DNA]</scope>
    <source>
        <strain>K12 / W3110 / ATCC 27325 / DSM 5911</strain>
    </source>
</reference>
<reference key="7">
    <citation type="journal article" date="1997" name="Electrophoresis">
        <title>Escherichia coli proteome analysis using the gene-protein database.</title>
        <authorList>
            <person name="VanBogelen R.A."/>
            <person name="Abshire K.Z."/>
            <person name="Moldover B."/>
            <person name="Olson E.R."/>
            <person name="Neidhardt F.C."/>
        </authorList>
    </citation>
    <scope>IDENTIFICATION BY 2D-GEL</scope>
</reference>
<reference key="8">
    <citation type="journal article" date="2018" name="Cell">
        <title>Protein AMPylation by an Evolutionarily Conserved Pseudokinase.</title>
        <authorList>
            <person name="Sreelatha A."/>
            <person name="Yee S.S."/>
            <person name="Lopez V.A."/>
            <person name="Park B.C."/>
            <person name="Kinch L.N."/>
            <person name="Pilch S."/>
            <person name="Servage K.A."/>
            <person name="Zhang J."/>
            <person name="Jiou J."/>
            <person name="Karasiewicz-Urbanska M."/>
            <person name="Lobocka M."/>
            <person name="Grishin N.V."/>
            <person name="Orth K."/>
            <person name="Kucharczyk R."/>
            <person name="Pawlowski K."/>
            <person name="Tomchick D.R."/>
            <person name="Tagliabracci V.S."/>
        </authorList>
    </citation>
    <scope>AMPYLATION AT TYR-13</scope>
    <scope>MUTAGENESIS OF GLY-10; CYS-11; PRO-12; TYR-13; CYS-14; VAL-15 AND ARG-16</scope>
</reference>
<reference key="9">
    <citation type="journal article" date="1991" name="Eur. J. Biochem.">
        <title>Nuclear magnetic resonance studies of recombinant Escherichia coli glutaredoxin. Sequence-specific assignments and secondary structure determination of the oxidized form.</title>
        <authorList>
            <person name="Sodano P."/>
            <person name="Chary K.V.R."/>
            <person name="Bjoernberg O."/>
            <person name="Holmgren A."/>
            <person name="Kren B."/>
            <person name="Fuchs J.A."/>
            <person name="Wuethrich K."/>
        </authorList>
    </citation>
    <scope>STRUCTURE BY NMR</scope>
</reference>
<reference key="10">
    <citation type="journal article" date="1991" name="J. Mol. Biol.">
        <title>Sequence-specific 1H NMR assignments and determination of the three-dimensional structure of reduced Escherichia coli glutaredoxin.</title>
        <authorList>
            <person name="Sodano P."/>
            <person name="Xia T.-H."/>
            <person name="Bushweller J.H."/>
            <person name="Bjoernberg O."/>
            <person name="Holmgren A."/>
            <person name="Billeter M."/>
            <person name="Wuethrich K."/>
        </authorList>
    </citation>
    <scope>STRUCTURE BY NMR</scope>
</reference>
<reference key="11">
    <citation type="journal article" date="1992" name="Protein Sci.">
        <title>NMR structure of oxidized Escherichia coli glutaredoxin: comparison with reduced E. coli glutaredoxin and functionally related proteins.</title>
        <authorList>
            <person name="Xia T.-H."/>
            <person name="Bushweller J.H."/>
            <person name="Sodano P."/>
            <person name="Billeter M."/>
            <person name="Bjoernberg O."/>
            <person name="Holmgren A."/>
            <person name="Wuethrich K."/>
        </authorList>
    </citation>
    <scope>STRUCTURE BY NMR</scope>
</reference>
<reference key="12">
    <citation type="journal article" date="1997" name="Biochemistry">
        <title>Comparison of backbone dynamics of reduced and oxidized Escherichia coli glutaredoxin-1 using 15N NMR relaxation measurements.</title>
        <authorList>
            <person name="Kelley J.J. III"/>
            <person name="Caputo M."/>
            <person name="Eaton S.F."/>
            <person name="Laue T.M."/>
            <person name="Bushweller J.H."/>
        </authorList>
    </citation>
    <scope>STRUCTURE BY NMR</scope>
</reference>
<accession>P68688</accession>
<accession>P00277</accession>
<organism>
    <name type="scientific">Escherichia coli (strain K12)</name>
    <dbReference type="NCBI Taxonomy" id="83333"/>
    <lineage>
        <taxon>Bacteria</taxon>
        <taxon>Pseudomonadati</taxon>
        <taxon>Pseudomonadota</taxon>
        <taxon>Gammaproteobacteria</taxon>
        <taxon>Enterobacterales</taxon>
        <taxon>Enterobacteriaceae</taxon>
        <taxon>Escherichia</taxon>
    </lineage>
</organism>
<evidence type="ECO:0000255" key="1">
    <source>
        <dbReference type="PROSITE-ProRule" id="PRU00686"/>
    </source>
</evidence>
<evidence type="ECO:0000269" key="2">
    <source>
    </source>
</evidence>
<evidence type="ECO:0000305" key="3"/>
<evidence type="ECO:0007829" key="4">
    <source>
        <dbReference type="PDB" id="1EGO"/>
    </source>
</evidence>
<protein>
    <recommendedName>
        <fullName>Glutaredoxin 1</fullName>
        <shortName>Grx1</shortName>
    </recommendedName>
</protein>